<accession>Q54V47</accession>
<evidence type="ECO:0000250" key="1"/>
<evidence type="ECO:0000305" key="2"/>
<keyword id="KW-0931">ER-Golgi transport</keyword>
<keyword id="KW-0333">Golgi apparatus</keyword>
<keyword id="KW-0342">GTP-binding</keyword>
<keyword id="KW-0547">Nucleotide-binding</keyword>
<keyword id="KW-0653">Protein transport</keyword>
<keyword id="KW-1185">Reference proteome</keyword>
<keyword id="KW-0813">Transport</keyword>
<protein>
    <recommendedName>
        <fullName>ADP-ribosylation factor J</fullName>
    </recommendedName>
</protein>
<sequence>MLSELFNSLASFFSNIFSLFEGKKETRILMIGLDGAGKSTLLYKLKLGDVVSTIPTIGFNVETIEYKNLSMTVWDVGGQHKIRPLWKHYYHGSNAVIFVVDSTDRERMDEVKEEIDNLLIQDELKGTQILVFANKQDMNNAMNTAEIVNSLDLNSIKDRKWYVQPCSAIRSDGIYEGFDWVANSLNNK</sequence>
<name>ARFJ_DICDI</name>
<dbReference type="EMBL" id="AAFI02000037">
    <property type="protein sequence ID" value="EAL67112.1"/>
    <property type="molecule type" value="Genomic_DNA"/>
</dbReference>
<dbReference type="RefSeq" id="XP_641084.1">
    <property type="nucleotide sequence ID" value="XM_635992.1"/>
</dbReference>
<dbReference type="SMR" id="Q54V47"/>
<dbReference type="FunCoup" id="Q54V47">
    <property type="interactions" value="82"/>
</dbReference>
<dbReference type="STRING" id="44689.Q54V47"/>
<dbReference type="PaxDb" id="44689-DDB0229372"/>
<dbReference type="EnsemblProtists" id="EAL67112">
    <property type="protein sequence ID" value="EAL67112"/>
    <property type="gene ID" value="DDB_G0280621"/>
</dbReference>
<dbReference type="GeneID" id="8622644"/>
<dbReference type="KEGG" id="ddi:DDB_G0280621"/>
<dbReference type="dictyBase" id="DDB_G0280621">
    <property type="gene designation" value="arrJ"/>
</dbReference>
<dbReference type="VEuPathDB" id="AmoebaDB:DDB_G0280621"/>
<dbReference type="eggNOG" id="KOG0070">
    <property type="taxonomic scope" value="Eukaryota"/>
</dbReference>
<dbReference type="HOGENOM" id="CLU_040729_9_3_1"/>
<dbReference type="InParanoid" id="Q54V47"/>
<dbReference type="OMA" id="LWRILNI"/>
<dbReference type="PhylomeDB" id="Q54V47"/>
<dbReference type="Reactome" id="R-DDI-1660514">
    <property type="pathway name" value="Synthesis of PIPs at the Golgi membrane"/>
</dbReference>
<dbReference type="Reactome" id="R-DDI-199992">
    <property type="pathway name" value="trans-Golgi Network Vesicle Budding"/>
</dbReference>
<dbReference type="Reactome" id="R-DDI-5620916">
    <property type="pathway name" value="VxPx cargo-targeting to cilium"/>
</dbReference>
<dbReference type="Reactome" id="R-DDI-6807878">
    <property type="pathway name" value="COPI-mediated anterograde transport"/>
</dbReference>
<dbReference type="Reactome" id="R-DDI-6811434">
    <property type="pathway name" value="COPI-dependent Golgi-to-ER retrograde traffic"/>
</dbReference>
<dbReference type="Reactome" id="R-DDI-6811438">
    <property type="pathway name" value="Intra-Golgi traffic"/>
</dbReference>
<dbReference type="PRO" id="PR:Q54V47"/>
<dbReference type="Proteomes" id="UP000002195">
    <property type="component" value="Chromosome 3"/>
</dbReference>
<dbReference type="GO" id="GO:0005737">
    <property type="term" value="C:cytoplasm"/>
    <property type="evidence" value="ECO:0000318"/>
    <property type="project" value="GO_Central"/>
</dbReference>
<dbReference type="GO" id="GO:0005794">
    <property type="term" value="C:Golgi apparatus"/>
    <property type="evidence" value="ECO:0007669"/>
    <property type="project" value="UniProtKB-SubCell"/>
</dbReference>
<dbReference type="GO" id="GO:0005886">
    <property type="term" value="C:plasma membrane"/>
    <property type="evidence" value="ECO:0000318"/>
    <property type="project" value="GO_Central"/>
</dbReference>
<dbReference type="GO" id="GO:0005525">
    <property type="term" value="F:GTP binding"/>
    <property type="evidence" value="ECO:0000318"/>
    <property type="project" value="GO_Central"/>
</dbReference>
<dbReference type="GO" id="GO:0003924">
    <property type="term" value="F:GTPase activity"/>
    <property type="evidence" value="ECO:0007669"/>
    <property type="project" value="InterPro"/>
</dbReference>
<dbReference type="GO" id="GO:0006886">
    <property type="term" value="P:intracellular protein transport"/>
    <property type="evidence" value="ECO:0000318"/>
    <property type="project" value="GO_Central"/>
</dbReference>
<dbReference type="GO" id="GO:0016192">
    <property type="term" value="P:vesicle-mediated transport"/>
    <property type="evidence" value="ECO:0000318"/>
    <property type="project" value="GO_Central"/>
</dbReference>
<dbReference type="CDD" id="cd00878">
    <property type="entry name" value="Arf_Arl"/>
    <property type="match status" value="1"/>
</dbReference>
<dbReference type="FunFam" id="3.40.50.300:FF:000412">
    <property type="entry name" value="ADP-ribosylation factor 1"/>
    <property type="match status" value="1"/>
</dbReference>
<dbReference type="Gene3D" id="3.40.50.300">
    <property type="entry name" value="P-loop containing nucleotide triphosphate hydrolases"/>
    <property type="match status" value="1"/>
</dbReference>
<dbReference type="InterPro" id="IPR027417">
    <property type="entry name" value="P-loop_NTPase"/>
</dbReference>
<dbReference type="InterPro" id="IPR005225">
    <property type="entry name" value="Small_GTP-bd"/>
</dbReference>
<dbReference type="InterPro" id="IPR024156">
    <property type="entry name" value="Small_GTPase_ARF"/>
</dbReference>
<dbReference type="InterPro" id="IPR006689">
    <property type="entry name" value="Small_GTPase_ARF/SAR"/>
</dbReference>
<dbReference type="NCBIfam" id="TIGR00231">
    <property type="entry name" value="small_GTP"/>
    <property type="match status" value="1"/>
</dbReference>
<dbReference type="PANTHER" id="PTHR11711">
    <property type="entry name" value="ADP RIBOSYLATION FACTOR-RELATED"/>
    <property type="match status" value="1"/>
</dbReference>
<dbReference type="Pfam" id="PF00025">
    <property type="entry name" value="Arf"/>
    <property type="match status" value="1"/>
</dbReference>
<dbReference type="PRINTS" id="PR00328">
    <property type="entry name" value="SAR1GTPBP"/>
</dbReference>
<dbReference type="SMART" id="SM00177">
    <property type="entry name" value="ARF"/>
    <property type="match status" value="1"/>
</dbReference>
<dbReference type="SMART" id="SM00175">
    <property type="entry name" value="RAB"/>
    <property type="match status" value="1"/>
</dbReference>
<dbReference type="SMART" id="SM00178">
    <property type="entry name" value="SAR"/>
    <property type="match status" value="1"/>
</dbReference>
<dbReference type="SUPFAM" id="SSF52540">
    <property type="entry name" value="P-loop containing nucleoside triphosphate hydrolases"/>
    <property type="match status" value="1"/>
</dbReference>
<dbReference type="PROSITE" id="PS51417">
    <property type="entry name" value="ARF"/>
    <property type="match status" value="1"/>
</dbReference>
<feature type="chain" id="PRO_0000328146" description="ADP-ribosylation factor J">
    <location>
        <begin position="1"/>
        <end position="188"/>
    </location>
</feature>
<feature type="binding site" evidence="1">
    <location>
        <begin position="34"/>
        <end position="40"/>
    </location>
    <ligand>
        <name>GTP</name>
        <dbReference type="ChEBI" id="CHEBI:37565"/>
    </ligand>
</feature>
<feature type="binding site" evidence="1">
    <location>
        <begin position="75"/>
        <end position="79"/>
    </location>
    <ligand>
        <name>GTP</name>
        <dbReference type="ChEBI" id="CHEBI:37565"/>
    </ligand>
</feature>
<feature type="binding site" evidence="1">
    <location>
        <begin position="134"/>
        <end position="137"/>
    </location>
    <ligand>
        <name>GTP</name>
        <dbReference type="ChEBI" id="CHEBI:37565"/>
    </ligand>
</feature>
<proteinExistence type="inferred from homology"/>
<gene>
    <name type="primary">arrJ</name>
    <name type="ORF">DDB_G0280621</name>
</gene>
<reference key="1">
    <citation type="journal article" date="2005" name="Nature">
        <title>The genome of the social amoeba Dictyostelium discoideum.</title>
        <authorList>
            <person name="Eichinger L."/>
            <person name="Pachebat J.A."/>
            <person name="Gloeckner G."/>
            <person name="Rajandream M.A."/>
            <person name="Sucgang R."/>
            <person name="Berriman M."/>
            <person name="Song J."/>
            <person name="Olsen R."/>
            <person name="Szafranski K."/>
            <person name="Xu Q."/>
            <person name="Tunggal B."/>
            <person name="Kummerfeld S."/>
            <person name="Madera M."/>
            <person name="Konfortov B.A."/>
            <person name="Rivero F."/>
            <person name="Bankier A.T."/>
            <person name="Lehmann R."/>
            <person name="Hamlin N."/>
            <person name="Davies R."/>
            <person name="Gaudet P."/>
            <person name="Fey P."/>
            <person name="Pilcher K."/>
            <person name="Chen G."/>
            <person name="Saunders D."/>
            <person name="Sodergren E.J."/>
            <person name="Davis P."/>
            <person name="Kerhornou A."/>
            <person name="Nie X."/>
            <person name="Hall N."/>
            <person name="Anjard C."/>
            <person name="Hemphill L."/>
            <person name="Bason N."/>
            <person name="Farbrother P."/>
            <person name="Desany B."/>
            <person name="Just E."/>
            <person name="Morio T."/>
            <person name="Rost R."/>
            <person name="Churcher C.M."/>
            <person name="Cooper J."/>
            <person name="Haydock S."/>
            <person name="van Driessche N."/>
            <person name="Cronin A."/>
            <person name="Goodhead I."/>
            <person name="Muzny D.M."/>
            <person name="Mourier T."/>
            <person name="Pain A."/>
            <person name="Lu M."/>
            <person name="Harper D."/>
            <person name="Lindsay R."/>
            <person name="Hauser H."/>
            <person name="James K.D."/>
            <person name="Quiles M."/>
            <person name="Madan Babu M."/>
            <person name="Saito T."/>
            <person name="Buchrieser C."/>
            <person name="Wardroper A."/>
            <person name="Felder M."/>
            <person name="Thangavelu M."/>
            <person name="Johnson D."/>
            <person name="Knights A."/>
            <person name="Loulseged H."/>
            <person name="Mungall K.L."/>
            <person name="Oliver K."/>
            <person name="Price C."/>
            <person name="Quail M.A."/>
            <person name="Urushihara H."/>
            <person name="Hernandez J."/>
            <person name="Rabbinowitsch E."/>
            <person name="Steffen D."/>
            <person name="Sanders M."/>
            <person name="Ma J."/>
            <person name="Kohara Y."/>
            <person name="Sharp S."/>
            <person name="Simmonds M.N."/>
            <person name="Spiegler S."/>
            <person name="Tivey A."/>
            <person name="Sugano S."/>
            <person name="White B."/>
            <person name="Walker D."/>
            <person name="Woodward J.R."/>
            <person name="Winckler T."/>
            <person name="Tanaka Y."/>
            <person name="Shaulsky G."/>
            <person name="Schleicher M."/>
            <person name="Weinstock G.M."/>
            <person name="Rosenthal A."/>
            <person name="Cox E.C."/>
            <person name="Chisholm R.L."/>
            <person name="Gibbs R.A."/>
            <person name="Loomis W.F."/>
            <person name="Platzer M."/>
            <person name="Kay R.R."/>
            <person name="Williams J.G."/>
            <person name="Dear P.H."/>
            <person name="Noegel A.A."/>
            <person name="Barrell B.G."/>
            <person name="Kuspa A."/>
        </authorList>
    </citation>
    <scope>NUCLEOTIDE SEQUENCE [LARGE SCALE GENOMIC DNA]</scope>
    <source>
        <strain>AX4</strain>
    </source>
</reference>
<organism>
    <name type="scientific">Dictyostelium discoideum</name>
    <name type="common">Social amoeba</name>
    <dbReference type="NCBI Taxonomy" id="44689"/>
    <lineage>
        <taxon>Eukaryota</taxon>
        <taxon>Amoebozoa</taxon>
        <taxon>Evosea</taxon>
        <taxon>Eumycetozoa</taxon>
        <taxon>Dictyostelia</taxon>
        <taxon>Dictyosteliales</taxon>
        <taxon>Dictyosteliaceae</taxon>
        <taxon>Dictyostelium</taxon>
    </lineage>
</organism>
<comment type="function">
    <text evidence="1">GTP-binding protein that may be involved in protein trafficking. May modulate vesicle budding and uncoating within the Golgi apparatus (By similarity).</text>
</comment>
<comment type="subcellular location">
    <subcellularLocation>
        <location evidence="1">Golgi apparatus</location>
    </subcellularLocation>
</comment>
<comment type="similarity">
    <text evidence="2">Belongs to the small GTPase superfamily. Arf family.</text>
</comment>